<keyword id="KW-0067">ATP-binding</keyword>
<keyword id="KW-0143">Chaperone</keyword>
<keyword id="KW-0547">Nucleotide-binding</keyword>
<keyword id="KW-0597">Phosphoprotein</keyword>
<keyword id="KW-0346">Stress response</keyword>
<gene>
    <name evidence="1" type="primary">dnaK</name>
</gene>
<evidence type="ECO:0000255" key="1">
    <source>
        <dbReference type="HAMAP-Rule" id="MF_00332"/>
    </source>
</evidence>
<evidence type="ECO:0000256" key="2">
    <source>
        <dbReference type="SAM" id="MobiDB-lite"/>
    </source>
</evidence>
<organism>
    <name type="scientific">Tetragenococcus halophilus</name>
    <name type="common">Pediococcus halophilus</name>
    <dbReference type="NCBI Taxonomy" id="51669"/>
    <lineage>
        <taxon>Bacteria</taxon>
        <taxon>Bacillati</taxon>
        <taxon>Bacillota</taxon>
        <taxon>Bacilli</taxon>
        <taxon>Lactobacillales</taxon>
        <taxon>Enterococcaceae</taxon>
        <taxon>Tetragenococcus</taxon>
    </lineage>
</organism>
<accession>Q93R27</accession>
<proteinExistence type="inferred from homology"/>
<comment type="function">
    <text evidence="1">Acts as a chaperone.</text>
</comment>
<comment type="induction">
    <text evidence="1">By stress conditions e.g. heat shock.</text>
</comment>
<comment type="similarity">
    <text evidence="1">Belongs to the heat shock protein 70 family.</text>
</comment>
<dbReference type="EMBL" id="AB070346">
    <property type="protein sequence ID" value="BAB63290.1"/>
    <property type="molecule type" value="Genomic_DNA"/>
</dbReference>
<dbReference type="SMR" id="Q93R27"/>
<dbReference type="BRENDA" id="3.6.4.10">
    <property type="organism ID" value="4579"/>
</dbReference>
<dbReference type="GO" id="GO:0005524">
    <property type="term" value="F:ATP binding"/>
    <property type="evidence" value="ECO:0007669"/>
    <property type="project" value="UniProtKB-UniRule"/>
</dbReference>
<dbReference type="GO" id="GO:0140662">
    <property type="term" value="F:ATP-dependent protein folding chaperone"/>
    <property type="evidence" value="ECO:0007669"/>
    <property type="project" value="InterPro"/>
</dbReference>
<dbReference type="GO" id="GO:0051082">
    <property type="term" value="F:unfolded protein binding"/>
    <property type="evidence" value="ECO:0007669"/>
    <property type="project" value="InterPro"/>
</dbReference>
<dbReference type="CDD" id="cd10234">
    <property type="entry name" value="ASKHA_NBD_HSP70_DnaK-like"/>
    <property type="match status" value="1"/>
</dbReference>
<dbReference type="FunFam" id="2.60.34.10:FF:000014">
    <property type="entry name" value="Chaperone protein DnaK HSP70"/>
    <property type="match status" value="1"/>
</dbReference>
<dbReference type="FunFam" id="1.20.1270.10:FF:000001">
    <property type="entry name" value="Molecular chaperone DnaK"/>
    <property type="match status" value="1"/>
</dbReference>
<dbReference type="FunFam" id="3.30.420.40:FF:000071">
    <property type="entry name" value="Molecular chaperone DnaK"/>
    <property type="match status" value="1"/>
</dbReference>
<dbReference type="FunFam" id="3.90.640.10:FF:000003">
    <property type="entry name" value="Molecular chaperone DnaK"/>
    <property type="match status" value="1"/>
</dbReference>
<dbReference type="Gene3D" id="1.20.1270.10">
    <property type="match status" value="1"/>
</dbReference>
<dbReference type="Gene3D" id="3.30.420.40">
    <property type="match status" value="2"/>
</dbReference>
<dbReference type="Gene3D" id="3.90.640.10">
    <property type="entry name" value="Actin, Chain A, domain 4"/>
    <property type="match status" value="1"/>
</dbReference>
<dbReference type="Gene3D" id="2.60.34.10">
    <property type="entry name" value="Substrate Binding Domain Of DNAk, Chain A, domain 1"/>
    <property type="match status" value="1"/>
</dbReference>
<dbReference type="HAMAP" id="MF_00332">
    <property type="entry name" value="DnaK"/>
    <property type="match status" value="1"/>
</dbReference>
<dbReference type="InterPro" id="IPR043129">
    <property type="entry name" value="ATPase_NBD"/>
</dbReference>
<dbReference type="InterPro" id="IPR012725">
    <property type="entry name" value="Chaperone_DnaK"/>
</dbReference>
<dbReference type="InterPro" id="IPR018181">
    <property type="entry name" value="Heat_shock_70_CS"/>
</dbReference>
<dbReference type="InterPro" id="IPR029048">
    <property type="entry name" value="HSP70_C_sf"/>
</dbReference>
<dbReference type="InterPro" id="IPR029047">
    <property type="entry name" value="HSP70_peptide-bd_sf"/>
</dbReference>
<dbReference type="InterPro" id="IPR013126">
    <property type="entry name" value="Hsp_70_fam"/>
</dbReference>
<dbReference type="NCBIfam" id="NF001413">
    <property type="entry name" value="PRK00290.1"/>
    <property type="match status" value="1"/>
</dbReference>
<dbReference type="NCBIfam" id="TIGR02350">
    <property type="entry name" value="prok_dnaK"/>
    <property type="match status" value="1"/>
</dbReference>
<dbReference type="PANTHER" id="PTHR19375">
    <property type="entry name" value="HEAT SHOCK PROTEIN 70KDA"/>
    <property type="match status" value="1"/>
</dbReference>
<dbReference type="Pfam" id="PF00012">
    <property type="entry name" value="HSP70"/>
    <property type="match status" value="1"/>
</dbReference>
<dbReference type="PRINTS" id="PR00301">
    <property type="entry name" value="HEATSHOCK70"/>
</dbReference>
<dbReference type="SUPFAM" id="SSF53067">
    <property type="entry name" value="Actin-like ATPase domain"/>
    <property type="match status" value="2"/>
</dbReference>
<dbReference type="SUPFAM" id="SSF100934">
    <property type="entry name" value="Heat shock protein 70kD (HSP70), C-terminal subdomain"/>
    <property type="match status" value="1"/>
</dbReference>
<dbReference type="SUPFAM" id="SSF100920">
    <property type="entry name" value="Heat shock protein 70kD (HSP70), peptide-binding domain"/>
    <property type="match status" value="1"/>
</dbReference>
<dbReference type="PROSITE" id="PS00297">
    <property type="entry name" value="HSP70_1"/>
    <property type="match status" value="1"/>
</dbReference>
<dbReference type="PROSITE" id="PS00329">
    <property type="entry name" value="HSP70_2"/>
    <property type="match status" value="1"/>
</dbReference>
<dbReference type="PROSITE" id="PS01036">
    <property type="entry name" value="HSP70_3"/>
    <property type="match status" value="1"/>
</dbReference>
<reference key="1">
    <citation type="submission" date="2001-08" db="EMBL/GenBank/DDBJ databases">
        <title>Characterization and expression analysis of dnaK operon of halophilic lactic acid bacterium Tetragenococcus halophila.</title>
        <authorList>
            <person name="Fukuda D."/>
            <person name="Watanabe M."/>
            <person name="Sonezaki S."/>
            <person name="Sugimoto S."/>
            <person name="Sonomoto K."/>
            <person name="Ishizaki A."/>
        </authorList>
    </citation>
    <scope>NUCLEOTIDE SEQUENCE [GENOMIC DNA]</scope>
</reference>
<name>DNAK_TETHA</name>
<sequence length="618" mass="66784">MSKIIGIDLGTTNSAVSVLEGGESQIITNPEGNRTTPSAVAFKNGEIQVGEVAKRQAVTNSDTVTSIKRHIGEDGYKVEANNKSYTPQEISAMILQHIKSFSEDYLGEEVEKAVITVPAYFNDSQRQATKDAGKIAGLEVERIVNEPTAAALAYGLDKTEQDEKILVFDLGGGTFDVSILELGDGVFDVLSTAGDNKLGGDDFDEKIIDYMVSEFKKENGIDLSKDKMALQRLKDAAEKAKKDLSGVSSTQISLPFITAGEDGPLHLEMNMTRAKFDELTSSLVDRTKEPVRQALKDADLSQSDIDQVILVGGSTRIPSVVESVRKETGKEPNKSVNPDEVVAMGAAIQAGVISGDVKDVVLLDVTPLSLGIETMGGVFTKLIDRNTTIPTSKSQVFSTAADNQPAVDIHVLQGERPMAADNKTLGRFQLTDIPAAPRGVPQIEVSFDIDKNGIVNVSAKDLGTQKRTKITIQSSSGLSDDEIDKMVKDAEANAEADEKRKEEVDLRNEVDTLLFTVDKTLSDLDGKVDEEEVKKAENARDELKAAVEADDIEDMKTKRDALNEIVQNLSVKMYEQASQEQQGDQAAQGSDDASNASGDDDVVDADFEEVDDDDNDNQ</sequence>
<feature type="chain" id="PRO_0000078571" description="Chaperone protein DnaK">
    <location>
        <begin position="1"/>
        <end position="618"/>
    </location>
</feature>
<feature type="region of interest" description="Disordered" evidence="2">
    <location>
        <begin position="573"/>
        <end position="618"/>
    </location>
</feature>
<feature type="compositionally biased region" description="Low complexity" evidence="2">
    <location>
        <begin position="576"/>
        <end position="597"/>
    </location>
</feature>
<feature type="compositionally biased region" description="Acidic residues" evidence="2">
    <location>
        <begin position="598"/>
        <end position="618"/>
    </location>
</feature>
<feature type="modified residue" description="Phosphothreonine; by autocatalysis" evidence="1">
    <location>
        <position position="174"/>
    </location>
</feature>
<protein>
    <recommendedName>
        <fullName evidence="1">Chaperone protein DnaK</fullName>
    </recommendedName>
    <alternativeName>
        <fullName evidence="1">HSP70</fullName>
    </alternativeName>
    <alternativeName>
        <fullName evidence="1">Heat shock 70 kDa protein</fullName>
    </alternativeName>
    <alternativeName>
        <fullName evidence="1">Heat shock protein 70</fullName>
    </alternativeName>
</protein>